<name>MIOX1_ARATH</name>
<organism>
    <name type="scientific">Arabidopsis thaliana</name>
    <name type="common">Mouse-ear cress</name>
    <dbReference type="NCBI Taxonomy" id="3702"/>
    <lineage>
        <taxon>Eukaryota</taxon>
        <taxon>Viridiplantae</taxon>
        <taxon>Streptophyta</taxon>
        <taxon>Embryophyta</taxon>
        <taxon>Tracheophyta</taxon>
        <taxon>Spermatophyta</taxon>
        <taxon>Magnoliopsida</taxon>
        <taxon>eudicotyledons</taxon>
        <taxon>Gunneridae</taxon>
        <taxon>Pentapetalae</taxon>
        <taxon>rosids</taxon>
        <taxon>malvids</taxon>
        <taxon>Brassicales</taxon>
        <taxon>Brassicaceae</taxon>
        <taxon>Camelineae</taxon>
        <taxon>Arabidopsis</taxon>
    </lineage>
</organism>
<sequence length="311" mass="36574">MTILIDRHSDQNDAGDEIVEKNQGNGKEEETELVLDAGFEAPHTNSFGRTFRDYDAESERRRGVEEFYRVNHIGQTVDFVRKMREEYEKLNRTEMSIWECCELLNEFIDESDPDLDEPQIEHLLQTAEAIRKDYPDEDWLHLTGLIHDLGKVLLHSSFGELPQWAVVGDTFPVGCAFDESIVHHKYFKENPDYDNPSYNSKYGIYTEGCGLDNVLMSWGHDDYMYLVAKENQTTLPSAGLFIIRYHSFYALHKSEAYKHLMNNEDRENMKWLKVFNKYDLYSKSKVRVNVEEVKPYYLSLTNKYFPSKLKW</sequence>
<keyword id="KW-0025">Alternative splicing</keyword>
<keyword id="KW-0060">Ascorbate biosynthesis</keyword>
<keyword id="KW-0963">Cytoplasm</keyword>
<keyword id="KW-0408">Iron</keyword>
<keyword id="KW-0479">Metal-binding</keyword>
<keyword id="KW-0560">Oxidoreductase</keyword>
<keyword id="KW-1185">Reference proteome</keyword>
<evidence type="ECO:0000250" key="1"/>
<evidence type="ECO:0000250" key="2">
    <source>
        <dbReference type="UniProtKB" id="Q8H1S0"/>
    </source>
</evidence>
<evidence type="ECO:0000256" key="3">
    <source>
        <dbReference type="SAM" id="MobiDB-lite"/>
    </source>
</evidence>
<evidence type="ECO:0000269" key="4">
    <source>
    </source>
</evidence>
<evidence type="ECO:0000303" key="5">
    <source>
    </source>
</evidence>
<evidence type="ECO:0000305" key="6"/>
<evidence type="ECO:0000305" key="7">
    <source>
    </source>
</evidence>
<comment type="function">
    <text evidence="7">Catalyzes the oxygenative cleavage of myo-inositol to D-glucuronate. Involved in the biosynthesis of UDP-glucuronic acid (UDP-GlcA), providing nucleotide sugars for cell-wall polymers. May be also involved in plant ascorbate biosynthesis.</text>
</comment>
<comment type="catalytic activity">
    <reaction evidence="2 7">
        <text>myo-inositol + O2 = D-glucuronate + H2O + H(+)</text>
        <dbReference type="Rhea" id="RHEA:23696"/>
        <dbReference type="ChEBI" id="CHEBI:15377"/>
        <dbReference type="ChEBI" id="CHEBI:15378"/>
        <dbReference type="ChEBI" id="CHEBI:15379"/>
        <dbReference type="ChEBI" id="CHEBI:17268"/>
        <dbReference type="ChEBI" id="CHEBI:58720"/>
        <dbReference type="EC" id="1.13.99.1"/>
    </reaction>
    <physiologicalReaction direction="left-to-right" evidence="7">
        <dbReference type="Rhea" id="RHEA:23697"/>
    </physiologicalReaction>
</comment>
<comment type="cofactor">
    <cofactor evidence="1">
        <name>Fe cation</name>
        <dbReference type="ChEBI" id="CHEBI:24875"/>
    </cofactor>
    <text evidence="1">Binds 2 iron ions per subunit.</text>
</comment>
<comment type="pathway">
    <text>Polyol metabolism; myo-inositol degradation into D-glucuronate; D-glucuronate from myo-inositol: step 1/1.</text>
</comment>
<comment type="subcellular location">
    <subcellularLocation>
        <location evidence="6">Cytoplasm</location>
    </subcellularLocation>
</comment>
<comment type="alternative products">
    <event type="alternative splicing"/>
    <isoform>
        <id>Q8L799-1</id>
        <name>1</name>
        <sequence type="displayed"/>
    </isoform>
    <text>A number of isoforms are produced. According to EST sequences.</text>
</comment>
<comment type="tissue specificity">
    <text evidence="4">Expressed in roots, young leaves, stems, flowers and siliques.</text>
</comment>
<comment type="disruption phenotype">
    <text evidence="4">Incorporation of the inositol pathway-derived monosaccharides is strongly reduced in knockout AtMIOX1 seedling walls.</text>
</comment>
<comment type="similarity">
    <text evidence="6">Belongs to the myo-inositol oxygenase family.</text>
</comment>
<comment type="sequence caution" evidence="6">
    <conflict type="erroneous gene model prediction">
        <sequence resource="EMBL-CDS" id="AAF43953"/>
    </conflict>
</comment>
<comment type="sequence caution" evidence="6">
    <conflict type="erroneous gene model prediction">
        <sequence resource="EMBL-CDS" id="AAF63180"/>
    </conflict>
</comment>
<protein>
    <recommendedName>
        <fullName evidence="5">Inositol oxygenase 1</fullName>
        <ecNumber evidence="2 7">1.13.99.1</ecNumber>
    </recommendedName>
    <alternativeName>
        <fullName evidence="5">Myo-inositol oxygenase 1</fullName>
        <shortName evidence="5">AtMIOX1</shortName>
        <shortName>MI oxygenase 1</shortName>
    </alternativeName>
</protein>
<feature type="chain" id="PRO_0000079154" description="Inositol oxygenase 1">
    <location>
        <begin position="1"/>
        <end position="311"/>
    </location>
</feature>
<feature type="region of interest" description="Disordered" evidence="3">
    <location>
        <begin position="1"/>
        <end position="29"/>
    </location>
</feature>
<feature type="compositionally biased region" description="Basic and acidic residues" evidence="3">
    <location>
        <begin position="1"/>
        <end position="11"/>
    </location>
</feature>
<feature type="binding site" evidence="1">
    <location>
        <position position="52"/>
    </location>
    <ligand>
        <name>substrate</name>
    </ligand>
</feature>
<feature type="binding site" evidence="1">
    <location>
        <begin position="109"/>
        <end position="111"/>
    </location>
    <ligand>
        <name>substrate</name>
    </ligand>
</feature>
<feature type="binding site" evidence="1">
    <location>
        <position position="122"/>
    </location>
    <ligand>
        <name>Fe cation</name>
        <dbReference type="ChEBI" id="CHEBI:24875"/>
        <label>1</label>
    </ligand>
</feature>
<feature type="binding site" evidence="1">
    <location>
        <position position="147"/>
    </location>
    <ligand>
        <name>Fe cation</name>
        <dbReference type="ChEBI" id="CHEBI:24875"/>
        <label>1</label>
    </ligand>
</feature>
<feature type="binding site" evidence="1">
    <location>
        <position position="148"/>
    </location>
    <ligand>
        <name>Fe cation</name>
        <dbReference type="ChEBI" id="CHEBI:24875"/>
        <label>1</label>
    </ligand>
</feature>
<feature type="binding site" evidence="1">
    <location>
        <position position="148"/>
    </location>
    <ligand>
        <name>Fe cation</name>
        <dbReference type="ChEBI" id="CHEBI:24875"/>
        <label>2</label>
    </ligand>
</feature>
<feature type="binding site" evidence="1">
    <location>
        <position position="151"/>
    </location>
    <ligand>
        <name>substrate</name>
    </ligand>
</feature>
<feature type="binding site" evidence="1">
    <location>
        <begin position="168"/>
        <end position="169"/>
    </location>
    <ligand>
        <name>substrate</name>
    </ligand>
</feature>
<feature type="binding site" evidence="1">
    <location>
        <position position="220"/>
    </location>
    <ligand>
        <name>Fe cation</name>
        <dbReference type="ChEBI" id="CHEBI:24875"/>
        <label>2</label>
    </ligand>
</feature>
<feature type="binding site" evidence="1">
    <location>
        <begin position="246"/>
        <end position="247"/>
    </location>
    <ligand>
        <name>substrate</name>
    </ligand>
</feature>
<feature type="binding site" evidence="1">
    <location>
        <position position="246"/>
    </location>
    <ligand>
        <name>Fe cation</name>
        <dbReference type="ChEBI" id="CHEBI:24875"/>
        <label>2</label>
    </ligand>
</feature>
<feature type="binding site" evidence="1">
    <location>
        <position position="279"/>
    </location>
    <ligand>
        <name>Fe cation</name>
        <dbReference type="ChEBI" id="CHEBI:24875"/>
        <label>1</label>
    </ligand>
</feature>
<feature type="sequence conflict" description="In Ref. 5; BAC42925 and 6; BAD43581/BAD43596/BAD94364." evidence="6" ref="5 6">
    <original>S</original>
    <variation>G</variation>
    <location>
        <position position="111"/>
    </location>
</feature>
<dbReference type="EC" id="1.13.99.1" evidence="2 7"/>
<dbReference type="EMBL" id="AC010657">
    <property type="protein sequence ID" value="AAF63180.1"/>
    <property type="status" value="ALT_SEQ"/>
    <property type="molecule type" value="Genomic_DNA"/>
</dbReference>
<dbReference type="EMBL" id="AC012188">
    <property type="protein sequence ID" value="AAF43953.1"/>
    <property type="status" value="ALT_SEQ"/>
    <property type="molecule type" value="Genomic_DNA"/>
</dbReference>
<dbReference type="EMBL" id="CP002684">
    <property type="protein sequence ID" value="AEE29174.1"/>
    <property type="molecule type" value="Genomic_DNA"/>
</dbReference>
<dbReference type="EMBL" id="CP002684">
    <property type="protein sequence ID" value="ANM58508.1"/>
    <property type="molecule type" value="Genomic_DNA"/>
</dbReference>
<dbReference type="EMBL" id="AY136388">
    <property type="protein sequence ID" value="AAM97054.1"/>
    <property type="molecule type" value="mRNA"/>
</dbReference>
<dbReference type="EMBL" id="BT000187">
    <property type="protein sequence ID" value="AAN15506.1"/>
    <property type="molecule type" value="mRNA"/>
</dbReference>
<dbReference type="EMBL" id="AK118307">
    <property type="protein sequence ID" value="BAC42925.1"/>
    <property type="molecule type" value="mRNA"/>
</dbReference>
<dbReference type="EMBL" id="AK175115">
    <property type="protein sequence ID" value="BAD42878.1"/>
    <property type="molecule type" value="mRNA"/>
</dbReference>
<dbReference type="EMBL" id="AK175818">
    <property type="protein sequence ID" value="BAD43581.1"/>
    <property type="molecule type" value="mRNA"/>
</dbReference>
<dbReference type="EMBL" id="AK175833">
    <property type="protein sequence ID" value="BAD43596.1"/>
    <property type="molecule type" value="mRNA"/>
</dbReference>
<dbReference type="EMBL" id="AK176690">
    <property type="protein sequence ID" value="BAD44453.1"/>
    <property type="molecule type" value="mRNA"/>
</dbReference>
<dbReference type="EMBL" id="AK221931">
    <property type="protein sequence ID" value="BAD94364.1"/>
    <property type="molecule type" value="mRNA"/>
</dbReference>
<dbReference type="RefSeq" id="NP_001320937.1">
    <molecule id="Q8L799-1"/>
    <property type="nucleotide sequence ID" value="NM_001332123.1"/>
</dbReference>
<dbReference type="RefSeq" id="NP_172904.2">
    <molecule id="Q8L799-1"/>
    <property type="nucleotide sequence ID" value="NM_101319.4"/>
</dbReference>
<dbReference type="SMR" id="Q8L799"/>
<dbReference type="FunCoup" id="Q8L799">
    <property type="interactions" value="286"/>
</dbReference>
<dbReference type="STRING" id="3702.Q8L799"/>
<dbReference type="PaxDb" id="3702-AT1G14520.1"/>
<dbReference type="ProteomicsDB" id="250705">
    <molecule id="Q8L799-1"/>
</dbReference>
<dbReference type="EnsemblPlants" id="AT1G14520.1">
    <molecule id="Q8L799-1"/>
    <property type="protein sequence ID" value="AT1G14520.1"/>
    <property type="gene ID" value="AT1G14520"/>
</dbReference>
<dbReference type="EnsemblPlants" id="AT1G14520.4">
    <molecule id="Q8L799-1"/>
    <property type="protein sequence ID" value="AT1G14520.4"/>
    <property type="gene ID" value="AT1G14520"/>
</dbReference>
<dbReference type="GeneID" id="838014"/>
<dbReference type="Gramene" id="AT1G14520.1">
    <molecule id="Q8L799-1"/>
    <property type="protein sequence ID" value="AT1G14520.1"/>
    <property type="gene ID" value="AT1G14520"/>
</dbReference>
<dbReference type="Gramene" id="AT1G14520.4">
    <molecule id="Q8L799-1"/>
    <property type="protein sequence ID" value="AT1G14520.4"/>
    <property type="gene ID" value="AT1G14520"/>
</dbReference>
<dbReference type="KEGG" id="ath:AT1G14520"/>
<dbReference type="Araport" id="AT1G14520"/>
<dbReference type="TAIR" id="AT1G14520">
    <property type="gene designation" value="MIOX1"/>
</dbReference>
<dbReference type="eggNOG" id="KOG1573">
    <property type="taxonomic scope" value="Eukaryota"/>
</dbReference>
<dbReference type="HOGENOM" id="CLU_050259_2_0_1"/>
<dbReference type="InParanoid" id="Q8L799"/>
<dbReference type="OMA" id="HTSGAYM"/>
<dbReference type="PhylomeDB" id="Q8L799"/>
<dbReference type="BioCyc" id="MetaCyc:AT1G14520-MONOMER"/>
<dbReference type="BRENDA" id="1.13.99.1">
    <property type="organism ID" value="399"/>
</dbReference>
<dbReference type="UniPathway" id="UPA00111">
    <property type="reaction ID" value="UER00527"/>
</dbReference>
<dbReference type="PRO" id="PR:Q8L799"/>
<dbReference type="Proteomes" id="UP000006548">
    <property type="component" value="Chromosome 1"/>
</dbReference>
<dbReference type="ExpressionAtlas" id="Q8L799">
    <property type="expression patterns" value="baseline and differential"/>
</dbReference>
<dbReference type="GO" id="GO:0005737">
    <property type="term" value="C:cytoplasm"/>
    <property type="evidence" value="ECO:0007669"/>
    <property type="project" value="UniProtKB-SubCell"/>
</dbReference>
<dbReference type="GO" id="GO:0050113">
    <property type="term" value="F:inositol oxygenase activity"/>
    <property type="evidence" value="ECO:0000315"/>
    <property type="project" value="TAIR"/>
</dbReference>
<dbReference type="GO" id="GO:0005506">
    <property type="term" value="F:iron ion binding"/>
    <property type="evidence" value="ECO:0007669"/>
    <property type="project" value="InterPro"/>
</dbReference>
<dbReference type="GO" id="GO:0019310">
    <property type="term" value="P:inositol catabolic process"/>
    <property type="evidence" value="ECO:0007669"/>
    <property type="project" value="InterPro"/>
</dbReference>
<dbReference type="GO" id="GO:0019853">
    <property type="term" value="P:L-ascorbic acid biosynthetic process"/>
    <property type="evidence" value="ECO:0007669"/>
    <property type="project" value="UniProtKB-KW"/>
</dbReference>
<dbReference type="InterPro" id="IPR007828">
    <property type="entry name" value="Inositol_oxygenase"/>
</dbReference>
<dbReference type="PANTHER" id="PTHR12588:SF12">
    <property type="entry name" value="INOSITOL OXYGENASE 1"/>
    <property type="match status" value="1"/>
</dbReference>
<dbReference type="PANTHER" id="PTHR12588">
    <property type="entry name" value="MYOINOSITOL OXYGENASE"/>
    <property type="match status" value="1"/>
</dbReference>
<dbReference type="Pfam" id="PF05153">
    <property type="entry name" value="MIOX"/>
    <property type="match status" value="1"/>
</dbReference>
<dbReference type="SUPFAM" id="SSF109604">
    <property type="entry name" value="HD-domain/PDEase-like"/>
    <property type="match status" value="1"/>
</dbReference>
<proteinExistence type="evidence at protein level"/>
<gene>
    <name type="primary">MIOX1</name>
    <name type="ordered locus">At1g14520</name>
    <name type="ORF">F14L17.30</name>
    <name type="ORF">T5E21.2</name>
    <name type="ORF">T5E21_19</name>
</gene>
<accession>Q8L799</accession>
<accession>Q8GXC4</accession>
<accession>Q9M9R1</accession>
<accession>Q9MA30</accession>
<reference key="1">
    <citation type="journal article" date="2005" name="Planta">
        <title>The inositol oxygenase gene family of Arabidopsis is involved in the biosynthesis of nucleotide sugar precursors for cell-wall matrix polysaccharides.</title>
        <authorList>
            <person name="Kanter U."/>
            <person name="Usadel B."/>
            <person name="Guerineau F."/>
            <person name="Li Y."/>
            <person name="Pauly M."/>
            <person name="Tenhaken R."/>
        </authorList>
    </citation>
    <scope>NUCLEOTIDE SEQUENCE [MRNA]</scope>
    <scope>FUNCTION</scope>
    <scope>CATALYTIC ACTIVITY</scope>
    <scope>TISSUE SPECIFICITY</scope>
    <scope>DISRUPTION PHENOTYPE</scope>
</reference>
<reference key="2">
    <citation type="journal article" date="2000" name="Nature">
        <title>Sequence and analysis of chromosome 1 of the plant Arabidopsis thaliana.</title>
        <authorList>
            <person name="Theologis A."/>
            <person name="Ecker J.R."/>
            <person name="Palm C.J."/>
            <person name="Federspiel N.A."/>
            <person name="Kaul S."/>
            <person name="White O."/>
            <person name="Alonso J."/>
            <person name="Altafi H."/>
            <person name="Araujo R."/>
            <person name="Bowman C.L."/>
            <person name="Brooks S.Y."/>
            <person name="Buehler E."/>
            <person name="Chan A."/>
            <person name="Chao Q."/>
            <person name="Chen H."/>
            <person name="Cheuk R.F."/>
            <person name="Chin C.W."/>
            <person name="Chung M.K."/>
            <person name="Conn L."/>
            <person name="Conway A.B."/>
            <person name="Conway A.R."/>
            <person name="Creasy T.H."/>
            <person name="Dewar K."/>
            <person name="Dunn P."/>
            <person name="Etgu P."/>
            <person name="Feldblyum T.V."/>
            <person name="Feng J.-D."/>
            <person name="Fong B."/>
            <person name="Fujii C.Y."/>
            <person name="Gill J.E."/>
            <person name="Goldsmith A.D."/>
            <person name="Haas B."/>
            <person name="Hansen N.F."/>
            <person name="Hughes B."/>
            <person name="Huizar L."/>
            <person name="Hunter J.L."/>
            <person name="Jenkins J."/>
            <person name="Johnson-Hopson C."/>
            <person name="Khan S."/>
            <person name="Khaykin E."/>
            <person name="Kim C.J."/>
            <person name="Koo H.L."/>
            <person name="Kremenetskaia I."/>
            <person name="Kurtz D.B."/>
            <person name="Kwan A."/>
            <person name="Lam B."/>
            <person name="Langin-Hooper S."/>
            <person name="Lee A."/>
            <person name="Lee J.M."/>
            <person name="Lenz C.A."/>
            <person name="Li J.H."/>
            <person name="Li Y.-P."/>
            <person name="Lin X."/>
            <person name="Liu S.X."/>
            <person name="Liu Z.A."/>
            <person name="Luros J.S."/>
            <person name="Maiti R."/>
            <person name="Marziali A."/>
            <person name="Militscher J."/>
            <person name="Miranda M."/>
            <person name="Nguyen M."/>
            <person name="Nierman W.C."/>
            <person name="Osborne B.I."/>
            <person name="Pai G."/>
            <person name="Peterson J."/>
            <person name="Pham P.K."/>
            <person name="Rizzo M."/>
            <person name="Rooney T."/>
            <person name="Rowley D."/>
            <person name="Sakano H."/>
            <person name="Salzberg S.L."/>
            <person name="Schwartz J.R."/>
            <person name="Shinn P."/>
            <person name="Southwick A.M."/>
            <person name="Sun H."/>
            <person name="Tallon L.J."/>
            <person name="Tambunga G."/>
            <person name="Toriumi M.J."/>
            <person name="Town C.D."/>
            <person name="Utterback T."/>
            <person name="Van Aken S."/>
            <person name="Vaysberg M."/>
            <person name="Vysotskaia V.S."/>
            <person name="Walker M."/>
            <person name="Wu D."/>
            <person name="Yu G."/>
            <person name="Fraser C.M."/>
            <person name="Venter J.C."/>
            <person name="Davis R.W."/>
        </authorList>
    </citation>
    <scope>NUCLEOTIDE SEQUENCE [LARGE SCALE GENOMIC DNA]</scope>
    <source>
        <strain>cv. Columbia</strain>
    </source>
</reference>
<reference key="3">
    <citation type="journal article" date="2017" name="Plant J.">
        <title>Araport11: a complete reannotation of the Arabidopsis thaliana reference genome.</title>
        <authorList>
            <person name="Cheng C.Y."/>
            <person name="Krishnakumar V."/>
            <person name="Chan A.P."/>
            <person name="Thibaud-Nissen F."/>
            <person name="Schobel S."/>
            <person name="Town C.D."/>
        </authorList>
    </citation>
    <scope>GENOME REANNOTATION</scope>
    <source>
        <strain>cv. Columbia</strain>
    </source>
</reference>
<reference key="4">
    <citation type="journal article" date="2003" name="Science">
        <title>Empirical analysis of transcriptional activity in the Arabidopsis genome.</title>
        <authorList>
            <person name="Yamada K."/>
            <person name="Lim J."/>
            <person name="Dale J.M."/>
            <person name="Chen H."/>
            <person name="Shinn P."/>
            <person name="Palm C.J."/>
            <person name="Southwick A.M."/>
            <person name="Wu H.C."/>
            <person name="Kim C.J."/>
            <person name="Nguyen M."/>
            <person name="Pham P.K."/>
            <person name="Cheuk R.F."/>
            <person name="Karlin-Newmann G."/>
            <person name="Liu S.X."/>
            <person name="Lam B."/>
            <person name="Sakano H."/>
            <person name="Wu T."/>
            <person name="Yu G."/>
            <person name="Miranda M."/>
            <person name="Quach H.L."/>
            <person name="Tripp M."/>
            <person name="Chang C.H."/>
            <person name="Lee J.M."/>
            <person name="Toriumi M.J."/>
            <person name="Chan M.M."/>
            <person name="Tang C.C."/>
            <person name="Onodera C.S."/>
            <person name="Deng J.M."/>
            <person name="Akiyama K."/>
            <person name="Ansari Y."/>
            <person name="Arakawa T."/>
            <person name="Banh J."/>
            <person name="Banno F."/>
            <person name="Bowser L."/>
            <person name="Brooks S.Y."/>
            <person name="Carninci P."/>
            <person name="Chao Q."/>
            <person name="Choy N."/>
            <person name="Enju A."/>
            <person name="Goldsmith A.D."/>
            <person name="Gurjal M."/>
            <person name="Hansen N.F."/>
            <person name="Hayashizaki Y."/>
            <person name="Johnson-Hopson C."/>
            <person name="Hsuan V.W."/>
            <person name="Iida K."/>
            <person name="Karnes M."/>
            <person name="Khan S."/>
            <person name="Koesema E."/>
            <person name="Ishida J."/>
            <person name="Jiang P.X."/>
            <person name="Jones T."/>
            <person name="Kawai J."/>
            <person name="Kamiya A."/>
            <person name="Meyers C."/>
            <person name="Nakajima M."/>
            <person name="Narusaka M."/>
            <person name="Seki M."/>
            <person name="Sakurai T."/>
            <person name="Satou M."/>
            <person name="Tamse R."/>
            <person name="Vaysberg M."/>
            <person name="Wallender E.K."/>
            <person name="Wong C."/>
            <person name="Yamamura Y."/>
            <person name="Yuan S."/>
            <person name="Shinozaki K."/>
            <person name="Davis R.W."/>
            <person name="Theologis A."/>
            <person name="Ecker J.R."/>
        </authorList>
    </citation>
    <scope>NUCLEOTIDE SEQUENCE [LARGE SCALE MRNA]</scope>
    <source>
        <strain>cv. Columbia</strain>
    </source>
</reference>
<reference key="5">
    <citation type="journal article" date="2002" name="Science">
        <title>Functional annotation of a full-length Arabidopsis cDNA collection.</title>
        <authorList>
            <person name="Seki M."/>
            <person name="Narusaka M."/>
            <person name="Kamiya A."/>
            <person name="Ishida J."/>
            <person name="Satou M."/>
            <person name="Sakurai T."/>
            <person name="Nakajima M."/>
            <person name="Enju A."/>
            <person name="Akiyama K."/>
            <person name="Oono Y."/>
            <person name="Muramatsu M."/>
            <person name="Hayashizaki Y."/>
            <person name="Kawai J."/>
            <person name="Carninci P."/>
            <person name="Itoh M."/>
            <person name="Ishii Y."/>
            <person name="Arakawa T."/>
            <person name="Shibata K."/>
            <person name="Shinagawa A."/>
            <person name="Shinozaki K."/>
        </authorList>
    </citation>
    <scope>NUCLEOTIDE SEQUENCE [LARGE SCALE MRNA]</scope>
    <source>
        <strain>cv. Columbia</strain>
    </source>
</reference>
<reference key="6">
    <citation type="submission" date="2004-09" db="EMBL/GenBank/DDBJ databases">
        <title>Large-scale analysis of RIKEN Arabidopsis full-length (RAFL) cDNAs.</title>
        <authorList>
            <person name="Totoki Y."/>
            <person name="Seki M."/>
            <person name="Ishida J."/>
            <person name="Nakajima M."/>
            <person name="Enju A."/>
            <person name="Kamiya A."/>
            <person name="Narusaka M."/>
            <person name="Shin-i T."/>
            <person name="Nakagawa M."/>
            <person name="Sakamoto N."/>
            <person name="Oishi K."/>
            <person name="Kohara Y."/>
            <person name="Kobayashi M."/>
            <person name="Toyoda A."/>
            <person name="Sakaki Y."/>
            <person name="Sakurai T."/>
            <person name="Iida K."/>
            <person name="Akiyama K."/>
            <person name="Satou M."/>
            <person name="Toyoda T."/>
            <person name="Konagaya A."/>
            <person name="Carninci P."/>
            <person name="Kawai J."/>
            <person name="Hayashizaki Y."/>
            <person name="Shinozaki K."/>
        </authorList>
    </citation>
    <scope>NUCLEOTIDE SEQUENCE [LARGE SCALE MRNA]</scope>
    <source>
        <strain>cv. Columbia</strain>
    </source>
</reference>